<organism>
    <name type="scientific">Yersinia pseudotuberculosis serotype O:1b (strain IP 31758)</name>
    <dbReference type="NCBI Taxonomy" id="349747"/>
    <lineage>
        <taxon>Bacteria</taxon>
        <taxon>Pseudomonadati</taxon>
        <taxon>Pseudomonadota</taxon>
        <taxon>Gammaproteobacteria</taxon>
        <taxon>Enterobacterales</taxon>
        <taxon>Yersiniaceae</taxon>
        <taxon>Yersinia</taxon>
    </lineage>
</organism>
<keyword id="KW-0067">ATP-binding</keyword>
<keyword id="KW-0173">Coenzyme A biosynthesis</keyword>
<keyword id="KW-0963">Cytoplasm</keyword>
<keyword id="KW-0418">Kinase</keyword>
<keyword id="KW-0547">Nucleotide-binding</keyword>
<keyword id="KW-0808">Transferase</keyword>
<accession>A7FNJ3</accession>
<evidence type="ECO:0000255" key="1">
    <source>
        <dbReference type="HAMAP-Rule" id="MF_00215"/>
    </source>
</evidence>
<dbReference type="EC" id="2.7.1.33" evidence="1"/>
<dbReference type="EMBL" id="CP000720">
    <property type="protein sequence ID" value="ABS48796.1"/>
    <property type="molecule type" value="Genomic_DNA"/>
</dbReference>
<dbReference type="RefSeq" id="WP_002212290.1">
    <property type="nucleotide sequence ID" value="NC_009708.1"/>
</dbReference>
<dbReference type="SMR" id="A7FNJ3"/>
<dbReference type="GeneID" id="57974956"/>
<dbReference type="KEGG" id="ypi:YpsIP31758_3870"/>
<dbReference type="HOGENOM" id="CLU_053818_1_1_6"/>
<dbReference type="UniPathway" id="UPA00241">
    <property type="reaction ID" value="UER00352"/>
</dbReference>
<dbReference type="Proteomes" id="UP000002412">
    <property type="component" value="Chromosome"/>
</dbReference>
<dbReference type="GO" id="GO:0005737">
    <property type="term" value="C:cytoplasm"/>
    <property type="evidence" value="ECO:0007669"/>
    <property type="project" value="UniProtKB-SubCell"/>
</dbReference>
<dbReference type="GO" id="GO:0005524">
    <property type="term" value="F:ATP binding"/>
    <property type="evidence" value="ECO:0007669"/>
    <property type="project" value="UniProtKB-UniRule"/>
</dbReference>
<dbReference type="GO" id="GO:0004594">
    <property type="term" value="F:pantothenate kinase activity"/>
    <property type="evidence" value="ECO:0007669"/>
    <property type="project" value="UniProtKB-UniRule"/>
</dbReference>
<dbReference type="GO" id="GO:0015937">
    <property type="term" value="P:coenzyme A biosynthetic process"/>
    <property type="evidence" value="ECO:0007669"/>
    <property type="project" value="UniProtKB-UniRule"/>
</dbReference>
<dbReference type="CDD" id="cd02025">
    <property type="entry name" value="PanK"/>
    <property type="match status" value="1"/>
</dbReference>
<dbReference type="FunFam" id="3.40.50.300:FF:000242">
    <property type="entry name" value="Pantothenate kinase"/>
    <property type="match status" value="1"/>
</dbReference>
<dbReference type="Gene3D" id="3.40.50.300">
    <property type="entry name" value="P-loop containing nucleotide triphosphate hydrolases"/>
    <property type="match status" value="1"/>
</dbReference>
<dbReference type="HAMAP" id="MF_00215">
    <property type="entry name" value="Pantothen_kinase_1"/>
    <property type="match status" value="1"/>
</dbReference>
<dbReference type="InterPro" id="IPR027417">
    <property type="entry name" value="P-loop_NTPase"/>
</dbReference>
<dbReference type="InterPro" id="IPR004566">
    <property type="entry name" value="PanK"/>
</dbReference>
<dbReference type="InterPro" id="IPR006083">
    <property type="entry name" value="PRK/URK"/>
</dbReference>
<dbReference type="NCBIfam" id="TIGR00554">
    <property type="entry name" value="panK_bact"/>
    <property type="match status" value="1"/>
</dbReference>
<dbReference type="PANTHER" id="PTHR10285">
    <property type="entry name" value="URIDINE KINASE"/>
    <property type="match status" value="1"/>
</dbReference>
<dbReference type="Pfam" id="PF00485">
    <property type="entry name" value="PRK"/>
    <property type="match status" value="1"/>
</dbReference>
<dbReference type="PIRSF" id="PIRSF000545">
    <property type="entry name" value="Pantothenate_kin"/>
    <property type="match status" value="1"/>
</dbReference>
<dbReference type="SUPFAM" id="SSF52540">
    <property type="entry name" value="P-loop containing nucleoside triphosphate hydrolases"/>
    <property type="match status" value="1"/>
</dbReference>
<name>COAA_YERP3</name>
<gene>
    <name evidence="1" type="primary">coaA</name>
    <name type="ordered locus">YpsIP31758_3870</name>
</gene>
<sequence length="316" mass="36016">MTKREQSLATPYLQFDRTQWAALRDSVPLTLTEEEIVKLKGINEDLSLDEVAQIYLPLSRLLNFYISSNLRRQAVLEQFLGTDGQRIPYVIGIAGSVAVGKSTTARLLQALLSRWPEHRSVELITTDGFLHPNKVLNERGLMKKKGFPESYDMHNLVKFVSEVKSGADYVTAPVYSHLIYDVVPDGNKVIKQPDILILEGLNVLQSGMDYPHDPHHVFVSDFVDFSIYVDAPEDLLQSWYINRFLKFRQGAFSNPDSYFHNYAKLPETEAIKIATQLWNEINGLNLKQNILPTRERASLIMTKSANHAVESVRLRK</sequence>
<comment type="catalytic activity">
    <reaction evidence="1">
        <text>(R)-pantothenate + ATP = (R)-4'-phosphopantothenate + ADP + H(+)</text>
        <dbReference type="Rhea" id="RHEA:16373"/>
        <dbReference type="ChEBI" id="CHEBI:10986"/>
        <dbReference type="ChEBI" id="CHEBI:15378"/>
        <dbReference type="ChEBI" id="CHEBI:29032"/>
        <dbReference type="ChEBI" id="CHEBI:30616"/>
        <dbReference type="ChEBI" id="CHEBI:456216"/>
        <dbReference type="EC" id="2.7.1.33"/>
    </reaction>
</comment>
<comment type="pathway">
    <text evidence="1">Cofactor biosynthesis; coenzyme A biosynthesis; CoA from (R)-pantothenate: step 1/5.</text>
</comment>
<comment type="subcellular location">
    <subcellularLocation>
        <location evidence="1">Cytoplasm</location>
    </subcellularLocation>
</comment>
<comment type="similarity">
    <text evidence="1">Belongs to the prokaryotic pantothenate kinase family.</text>
</comment>
<protein>
    <recommendedName>
        <fullName evidence="1">Pantothenate kinase</fullName>
        <ecNumber evidence="1">2.7.1.33</ecNumber>
    </recommendedName>
    <alternativeName>
        <fullName evidence="1">Pantothenic acid kinase</fullName>
    </alternativeName>
</protein>
<reference key="1">
    <citation type="journal article" date="2007" name="PLoS Genet.">
        <title>The complete genome sequence of Yersinia pseudotuberculosis IP31758, the causative agent of Far East scarlet-like fever.</title>
        <authorList>
            <person name="Eppinger M."/>
            <person name="Rosovitz M.J."/>
            <person name="Fricke W.F."/>
            <person name="Rasko D.A."/>
            <person name="Kokorina G."/>
            <person name="Fayolle C."/>
            <person name="Lindler L.E."/>
            <person name="Carniel E."/>
            <person name="Ravel J."/>
        </authorList>
    </citation>
    <scope>NUCLEOTIDE SEQUENCE [LARGE SCALE GENOMIC DNA]</scope>
    <source>
        <strain>IP 31758</strain>
    </source>
</reference>
<proteinExistence type="inferred from homology"/>
<feature type="chain" id="PRO_1000058636" description="Pantothenate kinase">
    <location>
        <begin position="1"/>
        <end position="316"/>
    </location>
</feature>
<feature type="binding site" evidence="1">
    <location>
        <begin position="95"/>
        <end position="102"/>
    </location>
    <ligand>
        <name>ATP</name>
        <dbReference type="ChEBI" id="CHEBI:30616"/>
    </ligand>
</feature>